<organism>
    <name type="scientific">Mus musculus</name>
    <name type="common">Mouse</name>
    <dbReference type="NCBI Taxonomy" id="10090"/>
    <lineage>
        <taxon>Eukaryota</taxon>
        <taxon>Metazoa</taxon>
        <taxon>Chordata</taxon>
        <taxon>Craniata</taxon>
        <taxon>Vertebrata</taxon>
        <taxon>Euteleostomi</taxon>
        <taxon>Mammalia</taxon>
        <taxon>Eutheria</taxon>
        <taxon>Euarchontoglires</taxon>
        <taxon>Glires</taxon>
        <taxon>Rodentia</taxon>
        <taxon>Myomorpha</taxon>
        <taxon>Muroidea</taxon>
        <taxon>Muridae</taxon>
        <taxon>Murinae</taxon>
        <taxon>Mus</taxon>
        <taxon>Mus</taxon>
    </lineage>
</organism>
<name>BAG6_MOUSE</name>
<evidence type="ECO:0000250" key="1">
    <source>
        <dbReference type="UniProtKB" id="P46379"/>
    </source>
</evidence>
<evidence type="ECO:0000255" key="2">
    <source>
        <dbReference type="PROSITE-ProRule" id="PRU00214"/>
    </source>
</evidence>
<evidence type="ECO:0000256" key="3">
    <source>
        <dbReference type="SAM" id="MobiDB-lite"/>
    </source>
</evidence>
<evidence type="ECO:0000269" key="4">
    <source>
    </source>
</evidence>
<evidence type="ECO:0000269" key="5">
    <source>
    </source>
</evidence>
<evidence type="ECO:0000269" key="6">
    <source>
    </source>
</evidence>
<evidence type="ECO:0000269" key="7">
    <source>
    </source>
</evidence>
<evidence type="ECO:0000269" key="8">
    <source>
    </source>
</evidence>
<evidence type="ECO:0000269" key="9">
    <source>
    </source>
</evidence>
<evidence type="ECO:0000269" key="10">
    <source>
    </source>
</evidence>
<evidence type="ECO:0000269" key="11">
    <source>
    </source>
</evidence>
<evidence type="ECO:0000303" key="12">
    <source>
    </source>
</evidence>
<evidence type="ECO:0000303" key="13">
    <source>
    </source>
</evidence>
<evidence type="ECO:0000303" key="14">
    <source>
    </source>
</evidence>
<evidence type="ECO:0000305" key="15"/>
<evidence type="ECO:0000312" key="16">
    <source>
        <dbReference type="MGI" id="MGI:1919439"/>
    </source>
</evidence>
<evidence type="ECO:0007744" key="17">
    <source>
    </source>
</evidence>
<evidence type="ECO:0007744" key="18">
    <source>
    </source>
</evidence>
<gene>
    <name evidence="16" type="primary">Bag6</name>
    <name evidence="12" type="synonym">Bat3</name>
</gene>
<protein>
    <recommendedName>
        <fullName evidence="15">Large proline-rich protein BAG6</fullName>
    </recommendedName>
    <alternativeName>
        <fullName>BAG family molecular chaperone regulator 6</fullName>
    </alternativeName>
    <alternativeName>
        <fullName evidence="16">BCL2-associated athanogene 6</fullName>
        <shortName evidence="14">BAG-6</shortName>
    </alternativeName>
    <alternativeName>
        <fullName evidence="12">HLA-B-associated transcript 3</fullName>
    </alternativeName>
    <alternativeName>
        <fullName evidence="13">Protein Scythe</fullName>
    </alternativeName>
</protein>
<proteinExistence type="evidence at protein level"/>
<reference key="1">
    <citation type="journal article" date="2003" name="Genome Res.">
        <title>Analysis of the gene-dense major histocompatibility complex class III region and its comparison to mouse.</title>
        <authorList>
            <person name="Xie T."/>
            <person name="Rowen L."/>
            <person name="Aguado B."/>
            <person name="Ahearn M.E."/>
            <person name="Madan A."/>
            <person name="Qin S."/>
            <person name="Campbell R.D."/>
            <person name="Hood L."/>
        </authorList>
    </citation>
    <scope>NUCLEOTIDE SEQUENCE [LARGE SCALE GENOMIC DNA]</scope>
    <source>
        <strain>129</strain>
    </source>
</reference>
<reference key="2">
    <citation type="journal article" date="2009" name="PLoS Biol.">
        <title>Lineage-specific biology revealed by a finished genome assembly of the mouse.</title>
        <authorList>
            <person name="Church D.M."/>
            <person name="Goodstadt L."/>
            <person name="Hillier L.W."/>
            <person name="Zody M.C."/>
            <person name="Goldstein S."/>
            <person name="She X."/>
            <person name="Bult C.J."/>
            <person name="Agarwala R."/>
            <person name="Cherry J.L."/>
            <person name="DiCuccio M."/>
            <person name="Hlavina W."/>
            <person name="Kapustin Y."/>
            <person name="Meric P."/>
            <person name="Maglott D."/>
            <person name="Birtle Z."/>
            <person name="Marques A.C."/>
            <person name="Graves T."/>
            <person name="Zhou S."/>
            <person name="Teague B."/>
            <person name="Potamousis K."/>
            <person name="Churas C."/>
            <person name="Place M."/>
            <person name="Herschleb J."/>
            <person name="Runnheim R."/>
            <person name="Forrest D."/>
            <person name="Amos-Landgraf J."/>
            <person name="Schwartz D.C."/>
            <person name="Cheng Z."/>
            <person name="Lindblad-Toh K."/>
            <person name="Eichler E.E."/>
            <person name="Ponting C.P."/>
        </authorList>
    </citation>
    <scope>NUCLEOTIDE SEQUENCE [LARGE SCALE GENOMIC DNA]</scope>
    <source>
        <strain>C57BL/6J</strain>
    </source>
</reference>
<reference key="3">
    <citation type="journal article" date="2004" name="Genome Res.">
        <title>The status, quality, and expansion of the NIH full-length cDNA project: the Mammalian Gene Collection (MGC).</title>
        <authorList>
            <consortium name="The MGC Project Team"/>
        </authorList>
    </citation>
    <scope>NUCLEOTIDE SEQUENCE [LARGE SCALE MRNA] OF 318-1154</scope>
    <source>
        <strain>FVB/N</strain>
        <tissue>Colon</tissue>
    </source>
</reference>
<reference key="4">
    <citation type="journal article" date="2005" name="Mol. Cell. Biol.">
        <title>The reaper-binding protein scythe modulates apoptosis and proliferation during mammalian development.</title>
        <authorList>
            <person name="Desmots F."/>
            <person name="Russell H.R."/>
            <person name="Lee Y."/>
            <person name="Boyd K."/>
            <person name="McKinnon P.J."/>
        </authorList>
    </citation>
    <scope>DISRUPTION PHENOTYPE</scope>
</reference>
<reference key="5">
    <citation type="journal article" date="2007" name="Genes Dev.">
        <title>HLA-B-associated transcript 3 (Bat3)/Scythe is essential for p300-mediated acetylation of p53.</title>
        <authorList>
            <person name="Sasaki T."/>
            <person name="Gan E.C."/>
            <person name="Wakeham A."/>
            <person name="Kornbluth S."/>
            <person name="Mak T.W."/>
            <person name="Okada H."/>
        </authorList>
    </citation>
    <scope>DISRUPTION PHENOTYPE</scope>
</reference>
<reference key="6">
    <citation type="journal article" date="2007" name="Proc. Natl. Acad. Sci. U.S.A.">
        <title>Large-scale phosphorylation analysis of mouse liver.</title>
        <authorList>
            <person name="Villen J."/>
            <person name="Beausoleil S.A."/>
            <person name="Gerber S.A."/>
            <person name="Gygi S.P."/>
        </authorList>
    </citation>
    <scope>PHOSPHORYLATION [LARGE SCALE ANALYSIS] AT SER-995</scope>
    <scope>IDENTIFICATION BY MASS SPECTROMETRY [LARGE SCALE ANALYSIS]</scope>
    <source>
        <tissue>Liver</tissue>
    </source>
</reference>
<reference key="7">
    <citation type="journal article" date="2008" name="J. Biol. Chem.">
        <title>Scythe regulates apoptosis-inducing factor stability during endoplasmic reticulum stress-induced apoptosis.</title>
        <authorList>
            <person name="Desmots F."/>
            <person name="Russell H.R."/>
            <person name="Michel D."/>
            <person name="McKinnon P.J."/>
        </authorList>
    </citation>
    <scope>FUNCTION</scope>
    <scope>INTERACTION WITH AIFM1</scope>
    <scope>SUBCELLULAR LOCATION</scope>
</reference>
<reference key="8">
    <citation type="journal article" date="2008" name="J. Cell Biol.">
        <title>Bat3 deficiency accelerates the degradation of Hsp70-2/HspA2 during spermatogenesis.</title>
        <authorList>
            <person name="Sasaki T."/>
            <person name="Marcon E."/>
            <person name="McQuire T."/>
            <person name="Arai Y."/>
            <person name="Moens P.B."/>
            <person name="Okada H."/>
        </authorList>
    </citation>
    <scope>FUNCTION</scope>
    <scope>INTERACTION WITH HSPA2</scope>
</reference>
<reference key="9">
    <citation type="journal article" date="2010" name="Cell">
        <title>A tissue-specific atlas of mouse protein phosphorylation and expression.</title>
        <authorList>
            <person name="Huttlin E.L."/>
            <person name="Jedrychowski M.P."/>
            <person name="Elias J.E."/>
            <person name="Goswami T."/>
            <person name="Rad R."/>
            <person name="Beausoleil S.A."/>
            <person name="Villen J."/>
            <person name="Haas W."/>
            <person name="Sowa M.E."/>
            <person name="Gygi S.P."/>
        </authorList>
    </citation>
    <scope>PHOSPHORYLATION [LARGE SCALE ANALYSIS] AT SER-995</scope>
    <scope>IDENTIFICATION BY MASS SPECTROMETRY [LARGE SCALE ANALYSIS]</scope>
    <source>
        <tissue>Brain</tissue>
        <tissue>Brown adipose tissue</tissue>
        <tissue>Heart</tissue>
        <tissue>Kidney</tissue>
        <tissue>Liver</tissue>
        <tissue>Lung</tissue>
        <tissue>Pancreas</tissue>
        <tissue>Spleen</tissue>
        <tissue>Testis</tissue>
    </source>
</reference>
<reference key="10">
    <citation type="journal article" date="2010" name="J. Cell Biol.">
        <title>BAG-6 is essential for selective elimination of defective proteasomal substrates.</title>
        <authorList>
            <person name="Minami R."/>
            <person name="Hayakawa A."/>
            <person name="Kagawa H."/>
            <person name="Yanagi Y."/>
            <person name="Yokosawa H."/>
            <person name="Kawahara H."/>
        </authorList>
    </citation>
    <scope>FUNCTION</scope>
</reference>
<reference key="11">
    <citation type="journal article" date="2014" name="Biochem. J.">
        <title>Signal-peptide-mediated translocation is regulated by a p97-AIRAPL complex.</title>
        <authorList>
            <person name="Glinka T."/>
            <person name="Alter J."/>
            <person name="Braunstein I."/>
            <person name="Tzach L."/>
            <person name="Wei Sheng C."/>
            <person name="Geifman S."/>
            <person name="Edelmann M.J."/>
            <person name="Kessler B.M."/>
            <person name="Stanhill A."/>
        </authorList>
    </citation>
    <scope>INTERACTION WITH ZFAND2B</scope>
</reference>
<reference key="12">
    <citation type="journal article" date="2015" name="Mol. Biol. Cell">
        <title>Proteasomal degradation of preemptive quality control (pQC) substrates is mediated by an AIRAPL-p97 complex.</title>
        <authorList>
            <person name="Braunstein I."/>
            <person name="Zach L."/>
            <person name="Allan S."/>
            <person name="Kalies K.U."/>
            <person name="Stanhill A."/>
        </authorList>
    </citation>
    <scope>INTERACTION WITH ZFAND2B</scope>
</reference>
<reference key="13">
    <citation type="journal article" date="2016" name="Structure">
        <title>Selective Binding of AIRAPL Tandem UIMs to Lys48-Linked Tri-Ubiquitin Chains.</title>
        <authorList>
            <person name="Rahighi S."/>
            <person name="Braunstein I."/>
            <person name="Ternette N."/>
            <person name="Kessler B."/>
            <person name="Kawasaki M."/>
            <person name="Kato R."/>
            <person name="Matsui T."/>
            <person name="Weiss T.M."/>
            <person name="Stanhill A."/>
            <person name="Wakatsuki S."/>
        </authorList>
    </citation>
    <scope>INTERACTION WITH ZFAND2B</scope>
</reference>
<feature type="chain" id="PRO_0000114898" description="Large proline-rich protein BAG6">
    <location>
        <begin position="1"/>
        <end position="1154"/>
    </location>
</feature>
<feature type="domain" description="Ubiquitin-like" evidence="2">
    <location>
        <begin position="17"/>
        <end position="92"/>
    </location>
</feature>
<feature type="repeat" description="1" evidence="1">
    <location>
        <begin position="237"/>
        <end position="271"/>
    </location>
</feature>
<feature type="repeat" description="2" evidence="1">
    <location>
        <begin position="416"/>
        <end position="444"/>
    </location>
</feature>
<feature type="repeat" description="3" evidence="1">
    <location>
        <begin position="597"/>
        <end position="624"/>
    </location>
</feature>
<feature type="repeat" description="4" evidence="1">
    <location>
        <begin position="630"/>
        <end position="658"/>
    </location>
</feature>
<feature type="region of interest" description="Disordered" evidence="3">
    <location>
        <begin position="87"/>
        <end position="125"/>
    </location>
</feature>
<feature type="region of interest" description="Disordered" evidence="3">
    <location>
        <begin position="186"/>
        <end position="274"/>
    </location>
</feature>
<feature type="region of interest" description="4 X 29 AA approximate repeats" evidence="1">
    <location>
        <begin position="237"/>
        <end position="658"/>
    </location>
</feature>
<feature type="region of interest" description="Disordered" evidence="3">
    <location>
        <begin position="387"/>
        <end position="442"/>
    </location>
</feature>
<feature type="region of interest" description="Disordered" evidence="3">
    <location>
        <begin position="463"/>
        <end position="531"/>
    </location>
</feature>
<feature type="region of interest" description="Disordered" evidence="3">
    <location>
        <begin position="568"/>
        <end position="626"/>
    </location>
</feature>
<feature type="region of interest" description="Disordered" evidence="3">
    <location>
        <begin position="673"/>
        <end position="719"/>
    </location>
</feature>
<feature type="region of interest" description="Disordered" evidence="3">
    <location>
        <begin position="968"/>
        <end position="1154"/>
    </location>
</feature>
<feature type="region of interest" description="Required for interaction with GET4" evidence="1">
    <location>
        <begin position="1032"/>
        <end position="1062"/>
    </location>
</feature>
<feature type="region of interest" description="Sufficient for the delivery of client proteins to the endoplasmic reticulum" evidence="1">
    <location>
        <begin position="1044"/>
        <end position="1154"/>
    </location>
</feature>
<feature type="region of interest" description="BAG-similar domain, required and sufficient for interaction with UBL4A" evidence="1">
    <location>
        <begin position="1080"/>
        <end position="1137"/>
    </location>
</feature>
<feature type="short sequence motif" description="Nuclear localization site" evidence="1">
    <location>
        <begin position="1034"/>
        <end position="1076"/>
    </location>
</feature>
<feature type="compositionally biased region" description="Low complexity" evidence="3">
    <location>
        <begin position="96"/>
        <end position="112"/>
    </location>
</feature>
<feature type="compositionally biased region" description="Polar residues" evidence="3">
    <location>
        <begin position="209"/>
        <end position="218"/>
    </location>
</feature>
<feature type="compositionally biased region" description="Pro residues" evidence="3">
    <location>
        <begin position="249"/>
        <end position="263"/>
    </location>
</feature>
<feature type="compositionally biased region" description="Low complexity" evidence="3">
    <location>
        <begin position="400"/>
        <end position="409"/>
    </location>
</feature>
<feature type="compositionally biased region" description="Polar residues" evidence="3">
    <location>
        <begin position="410"/>
        <end position="426"/>
    </location>
</feature>
<feature type="compositionally biased region" description="Pro residues" evidence="3">
    <location>
        <begin position="428"/>
        <end position="439"/>
    </location>
</feature>
<feature type="compositionally biased region" description="Pro residues" evidence="3">
    <location>
        <begin position="508"/>
        <end position="521"/>
    </location>
</feature>
<feature type="compositionally biased region" description="Low complexity" evidence="3">
    <location>
        <begin position="568"/>
        <end position="581"/>
    </location>
</feature>
<feature type="compositionally biased region" description="Low complexity" evidence="3">
    <location>
        <begin position="591"/>
        <end position="609"/>
    </location>
</feature>
<feature type="compositionally biased region" description="Pro residues" evidence="3">
    <location>
        <begin position="611"/>
        <end position="622"/>
    </location>
</feature>
<feature type="compositionally biased region" description="Pro residues" evidence="3">
    <location>
        <begin position="678"/>
        <end position="702"/>
    </location>
</feature>
<feature type="compositionally biased region" description="Low complexity" evidence="3">
    <location>
        <begin position="1029"/>
        <end position="1042"/>
    </location>
</feature>
<feature type="compositionally biased region" description="Low complexity" evidence="3">
    <location>
        <begin position="1088"/>
        <end position="1098"/>
    </location>
</feature>
<feature type="site" description="Cleavage; by CASP3" evidence="1">
    <location>
        <begin position="1023"/>
        <end position="1024"/>
    </location>
</feature>
<feature type="modified residue" description="N-acetylmethionine" evidence="1">
    <location>
        <position position="1"/>
    </location>
</feature>
<feature type="modified residue" description="Phosphoserine" evidence="1">
    <location>
        <position position="96"/>
    </location>
</feature>
<feature type="modified residue" description="Phosphothreonine" evidence="1">
    <location>
        <position position="117"/>
    </location>
</feature>
<feature type="modified residue" description="Phosphoserine" evidence="1">
    <location>
        <position position="986"/>
    </location>
</feature>
<feature type="modified residue" description="Phosphoserine" evidence="17 18">
    <location>
        <position position="995"/>
    </location>
</feature>
<feature type="modified residue" description="Phosphothreonine" evidence="1">
    <location>
        <position position="1075"/>
    </location>
</feature>
<feature type="modified residue" description="Phosphoserine" evidence="1">
    <location>
        <position position="1103"/>
    </location>
</feature>
<feature type="modified residue" description="Phosphoserine" evidence="1">
    <location>
        <position position="1139"/>
    </location>
</feature>
<feature type="sequence conflict" description="In Ref. 3; AAH26647." evidence="15" ref="3">
    <location>
        <position position="528"/>
    </location>
</feature>
<feature type="sequence conflict" description="In Ref. 3; AAH26647." evidence="15" ref="3">
    <original>P</original>
    <variation>S</variation>
    <location>
        <position position="1012"/>
    </location>
</feature>
<comment type="function">
    <text evidence="1 6 7 8">ATP-independent molecular chaperone preventing the aggregation of misfolded and hydrophobic patches-containing proteins (PubMed:18056262, PubMed:18678708, PubMed:20713601). Functions as part of a cytosolic protein quality control complex, the BAG6/BAT3 complex, which maintains these client proteins in a soluble state and participates in their proper delivery to the endoplasmic reticulum or alternatively can promote their sorting to the proteasome where they undergo degradation (PubMed:20713601). The BAG6/BAT3 complex is involved in the post-translational delivery of tail-anchored/type II transmembrane proteins to the endoplasmic reticulum membrane. Recruited to ribosomes, it interacts with the transmembrane region of newly synthesized tail-anchored proteins and together with SGTA and ASNA1 mediates their delivery to the endoplasmic reticulum. Client proteins that cannot be properly delivered to the endoplasmic reticulum are ubiquitinated by RNF126, an E3 ubiquitin-protein ligase associated with BAG6 and are sorted to the proteasome. SGTA which prevents the recruitment of RNF126 to BAG6 may negatively regulate the ubiquitination and the proteasomal degradation of client proteins. Similarly, the BAG6/BAT3 complex also functions as a sorting platform for proteins of the secretory pathway that are mislocalized to the cytosol either delivering them to the proteasome for degradation or to the endoplasmic reticulum. The BAG6/BAT3 complex also plays a role in the endoplasmic reticulum-associated degradation (ERAD), a quality control mechanism that eliminates unwanted proteins of the endoplasmic reticulum through their retrotranslocation to the cytosol and their targeting to the proteasome. It maintains these retrotranslocated proteins in an unfolded yet soluble state condition in the cytosol to ensure their proper delivery to the proteasome (By similarity). BAG6 is also required for selective ubiquitin-mediated degradation of defective nascent chain polypeptides by the proteasome. In this context, it may participate in the production of antigenic peptides and play a role in antigen presentation in immune response (PubMed:20713601). BAG6 is also involved in endoplasmic reticulum stress-induced pre-emptive quality control, a mechanism that selectively attenuates the translocation of newly synthesized proteins into the endoplasmic reticulum and reroutes them to the cytosol for proteasomal degradation. BAG6 may ensure the proper degradation of these proteins and thereby protects the endoplasmic reticulum from protein overload upon stress (By similarity). By inhibiting the polyubiquitination and subsequent proteasomal degradation of HSPA2 it may also play a role in the assembly of the synaptonemal complex during spermatogenesis (PubMed:18678708). Also positively regulates apoptosis by interacting with and stabilizing the proapoptotic factor AIFM1 (PubMed:18056262). By controlling the steady-state expression of the IGF1R receptor, indirectly regulates the insulin-like growth factor receptor signaling pathway (By similarity).</text>
</comment>
<comment type="function">
    <text evidence="1">Involved in DNA damage-induced apoptosis: following DNA damage, accumulates in the nucleus and forms a complex with p300/EP300, enhancing p300/EP300-mediated p53/TP53 acetylation leading to increase p53/TP53 transcriptional activity. When nuclear, may also act as a component of some chromatin regulator complex that regulates histone 3 'Lys-4' dimethylation (H3K4me2).</text>
</comment>
<comment type="function">
    <text evidence="1">Released extracellularly via exosomes, it is a ligand of the natural killer/NK cells receptor NCR3 and stimulates NK cells cytotoxicity. It may thereby trigger NK cells cytotoxicity against neighboring tumor cells and immature myeloid dendritic cells (DC).</text>
</comment>
<comment type="function">
    <text evidence="1">May mediate ricin-induced apoptosis.</text>
</comment>
<comment type="subunit">
    <text evidence="1 6 7 9 10 11">Component of the BAG6/BAT3 complex, also named BAT3 complex, at least composed of BAG6, UBL4A and GET4/TRC35. Interacts with GET4; the interaction is direct and localizes BAG6 in the cytosol (By similarity). Interacts with UBL4A; the interaction is direct and required for UBL4A protein stability (By similarity). Interacts with AIFM1 (PubMed:18056262). Interacts with HSPA2 (PubMed:18678708). Interacts with CTCFL. Interacts with p300/EP300. Interacts (via ubiquitin-like domain) with RNF126; required for BAG6-dependent ubiquitination of proteins mislocalized to the cytosol. Interacts (via ubiquitin-like domain) with SGTA; SGTA competes with RNF126 by binding the same region of BAG6, thereby promoting deubiquitination of BAG6-target proteins and rescuing them from degradation. Interacts with ricin A chain. Interacts with VCP and AMFR; both form the VCP/p97-AMFR/gp78 complex. Interacts with SYVN1. Interacts with USP13; the interaction is direct and may mediate UBL4A deubiquitination (By similarity). Interacts with ZFAND2B (PubMed:24160817, PubMed:26337389, PubMed:26876100). Interacts with KPNA2 (By similarity). Interacts with UBQLN4 (By similarity).</text>
</comment>
<comment type="interaction">
    <interactant intactId="EBI-644645">
        <id>Q9Z1R2</id>
    </interactant>
    <interactant intactId="EBI-400402">
        <id>P11798-2</id>
        <label>Camk2a</label>
    </interactant>
    <organismsDiffer>false</organismsDiffer>
    <experiments>3</experiments>
</comment>
<comment type="interaction">
    <interactant intactId="EBI-644645">
        <id>Q9Z1R2</id>
    </interactant>
    <interactant intactId="EBI-647362">
        <id>O35305</id>
        <label>Tnfrsf11a</label>
    </interactant>
    <organismsDiffer>false</organismsDiffer>
    <experiments>4</experiments>
</comment>
<comment type="subcellular location">
    <subcellularLocation>
        <location evidence="6">Cytoplasm</location>
        <location evidence="6">Cytosol</location>
    </subcellularLocation>
    <subcellularLocation>
        <location evidence="1">Nucleus</location>
    </subcellularLocation>
    <subcellularLocation>
        <location evidence="1">Secreted</location>
        <location evidence="1">Extracellular exosome</location>
    </subcellularLocation>
    <text evidence="1">Normally localized in cytosol and nucleus, it can also be released extracellularly, in exosomes, by tumor and myeloid dendritic cells.</text>
</comment>
<comment type="domain">
    <text evidence="1">The ubiquitin-like domain mediates interaction with the E3 ubiquitin-protein ligase RNF126 which is responsible for the BAG6-dependent ubiquitination of client proteins. SGTA also binds this domain and competes with RNF126 to antagonize client protein ubiquitination and degradation. The ubiquitin-like domain also mediates the interaction with USP13.</text>
</comment>
<comment type="PTM">
    <text evidence="1">Ricin can induce a cleavage by the caspase CASP3. The released C-terminal peptide induces apoptosis.</text>
</comment>
<comment type="disruption phenotype">
    <text evidence="4 5">Lethality associated with pronounced developmental defects in the lung, kidney and brain. Lethality is either embryonic consecutive to abnormal brain development or perinatal associated with pronounced developmental defects in the lung and kidney. These developmental defects were associated with widespread aberrant apoptosis and proliferation. Lethality can be partially rescued in an ICR genetic background: mice are slightly smaller in size than their wild-type counterparts and show impaired genotoxic stress responses.</text>
</comment>
<keyword id="KW-0007">Acetylation</keyword>
<keyword id="KW-0053">Apoptosis</keyword>
<keyword id="KW-0143">Chaperone</keyword>
<keyword id="KW-0156">Chromatin regulator</keyword>
<keyword id="KW-0963">Cytoplasm</keyword>
<keyword id="KW-0221">Differentiation</keyword>
<keyword id="KW-0391">Immunity</keyword>
<keyword id="KW-0539">Nucleus</keyword>
<keyword id="KW-0597">Phosphoprotein</keyword>
<keyword id="KW-1185">Reference proteome</keyword>
<keyword id="KW-0677">Repeat</keyword>
<keyword id="KW-0964">Secreted</keyword>
<keyword id="KW-0744">Spermatogenesis</keyword>
<keyword id="KW-0813">Transport</keyword>
<sequence>MEPSDSASTAMEEPDSLEVLVKTLDSQTRTFIVGAQMNVKEFKEHIAASVSIPSEKQRLIYQGRVLQDDKKLQEYNVGGKVIHLVERAPPQTQLPSGASSGTGSASATHGGAPLPGTRGPGASVHDRNANSYVMVGTFNLPSDGSAVDVHINMEQAPIQSEPRVRLVMAQHMIRDIQTLLSRMECRGGTQAQASQPPPQTPQTVASETVALNSQTSEPVESEAPPREPMESEEMEERPPTQTPELAPSGPAPAGPAPAGPAPAPETNAPNHPSPAEHVEVLQELQRLQRRLQPFLQRYCEVLGAAATTDYNNNHEGREEDQRLINLVGESLRLLGNTFVALSDLRCNLACAPPRHLHVVRPMSHYTTPMVLQQAAIPIQINVGTTVTMTGNGARPPPAPGAEAATPGSAQATSLPPSSTTVDSSTEGAPPPGPAPPPASSHPRVIRISHQSVEPVVMMHMNIQDSGAQPGGVPSAPTGPLGPPGHGQTLGQQVPGFPTAPTRVVIARPTPPQARPSHPGGPPVSGALQGAGLGTNTSLAQMVSGLVGQLLMQPVLVAQGTPGMAQAQAQAQAQAQAQAQAPAPAPAPAPAPATASASAGTTNTATTAGPAPGGPAQPPPPQPSAADLQFSQLLGNLLGPAGPGAGGPGMASPTITVAMPGVPAFLQGMTDFLQASQTAPPPPPPPPPPPPAPEQQSTPPPGSPSGGTASPGGLGPESLPPEFFTSVVQGVLSSLLGSLGARAGSSESIAAFIQRLSGSSNIFEPGADGALGFFGALLSLLCQNFSMVDVVMLLHGHFQPLQRLQPQLRSFFHQHYLGGQEPTPSNIRMATHTLITGLEEYVRESFSLVQVQPGVDIIRTNLEFLQEQFNSIAAHVLHCTDSGFGARLLELCNQGLFECLALNLHCLGGQQMELAAVINGRIRRMSRGVNPSLVSWLTTMMGLRLQVVLEHMPVGPDAILRYVRRVGDPPQTLPEEPMEVQGAERTSPEPQRENASPAPGTTAEEAMSRGPPPAPEGGSRDEQDGASADAEPWAAAVPPEWVPIIQQDIQSQRKVKPQPPLSDAYLSGMPAKRRKTMQGEGPQLLLSEAVSRAAKAAGARPLTSPESLSRDLEAPEVQESYRQQLRSDIQKRLQEDPNYSPQRFPNAHRAFADDP</sequence>
<dbReference type="EMBL" id="AF109719">
    <property type="protein sequence ID" value="AAC82479.1"/>
    <property type="molecule type" value="Genomic_DNA"/>
</dbReference>
<dbReference type="EMBL" id="CR974444">
    <property type="status" value="NOT_ANNOTATED_CDS"/>
    <property type="molecule type" value="Genomic_DNA"/>
</dbReference>
<dbReference type="EMBL" id="BC026647">
    <property type="protein sequence ID" value="AAH26647.1"/>
    <property type="molecule type" value="mRNA"/>
</dbReference>
<dbReference type="CCDS" id="CCDS28688.1"/>
<dbReference type="RefSeq" id="NP_001359196.1">
    <property type="nucleotide sequence ID" value="NM_001372267.1"/>
</dbReference>
<dbReference type="RefSeq" id="NP_001359197.1">
    <property type="nucleotide sequence ID" value="NM_001372268.1"/>
</dbReference>
<dbReference type="RefSeq" id="NP_476512.1">
    <property type="nucleotide sequence ID" value="NM_057171.3"/>
</dbReference>
<dbReference type="RefSeq" id="XP_030105575.1">
    <property type="nucleotide sequence ID" value="XM_030249715.2"/>
</dbReference>
<dbReference type="SMR" id="Q9Z1R2"/>
<dbReference type="BioGRID" id="230309">
    <property type="interactions" value="21"/>
</dbReference>
<dbReference type="ComplexPortal" id="CPX-133">
    <property type="entry name" value="BAT3 complex"/>
</dbReference>
<dbReference type="DIP" id="DIP-49391N"/>
<dbReference type="FunCoup" id="Q9Z1R2">
    <property type="interactions" value="3948"/>
</dbReference>
<dbReference type="IntAct" id="Q9Z1R2">
    <property type="interactions" value="8"/>
</dbReference>
<dbReference type="MINT" id="Q9Z1R2"/>
<dbReference type="STRING" id="10090.ENSMUSP00000025250"/>
<dbReference type="GlyGen" id="Q9Z1R2">
    <property type="glycosylation" value="7 sites, 2 N-linked glycans (2 sites), 1 O-linked glycan (2 sites)"/>
</dbReference>
<dbReference type="iPTMnet" id="Q9Z1R2"/>
<dbReference type="PhosphoSitePlus" id="Q9Z1R2"/>
<dbReference type="SwissPalm" id="Q9Z1R2"/>
<dbReference type="jPOST" id="Q9Z1R2"/>
<dbReference type="PaxDb" id="10090-ENSMUSP00000025250"/>
<dbReference type="ProteomicsDB" id="273649"/>
<dbReference type="Pumba" id="Q9Z1R2"/>
<dbReference type="Antibodypedia" id="27346">
    <property type="antibodies" value="304 antibodies from 36 providers"/>
</dbReference>
<dbReference type="Ensembl" id="ENSMUST00000025250.14">
    <property type="protein sequence ID" value="ENSMUSP00000025250.8"/>
    <property type="gene ID" value="ENSMUSG00000024392.18"/>
</dbReference>
<dbReference type="GeneID" id="224727"/>
<dbReference type="KEGG" id="mmu:224727"/>
<dbReference type="UCSC" id="uc008cgb.2">
    <property type="organism name" value="mouse"/>
</dbReference>
<dbReference type="AGR" id="MGI:1919439"/>
<dbReference type="CTD" id="7917"/>
<dbReference type="MGI" id="MGI:1919439">
    <property type="gene designation" value="Bag6"/>
</dbReference>
<dbReference type="VEuPathDB" id="HostDB:ENSMUSG00000024392"/>
<dbReference type="eggNOG" id="KOG4248">
    <property type="taxonomic scope" value="Eukaryota"/>
</dbReference>
<dbReference type="GeneTree" id="ENSGT00390000016199"/>
<dbReference type="HOGENOM" id="CLU_012159_0_0_1"/>
<dbReference type="InParanoid" id="Q9Z1R2"/>
<dbReference type="OMA" id="NRITVAM"/>
<dbReference type="OrthoDB" id="1885901at2759"/>
<dbReference type="PhylomeDB" id="Q9Z1R2"/>
<dbReference type="TreeFam" id="TF328437"/>
<dbReference type="BioGRID-ORCS" id="224727">
    <property type="hits" value="14 hits in 79 CRISPR screens"/>
</dbReference>
<dbReference type="ChiTaRS" id="Bag6">
    <property type="organism name" value="mouse"/>
</dbReference>
<dbReference type="PRO" id="PR:Q9Z1R2"/>
<dbReference type="Proteomes" id="UP000000589">
    <property type="component" value="Chromosome 17"/>
</dbReference>
<dbReference type="RNAct" id="Q9Z1R2">
    <property type="molecule type" value="protein"/>
</dbReference>
<dbReference type="Bgee" id="ENSMUSG00000024392">
    <property type="expression patterns" value="Expressed in embryonic brain and 269 other cell types or tissues"/>
</dbReference>
<dbReference type="ExpressionAtlas" id="Q9Z1R2">
    <property type="expression patterns" value="baseline and differential"/>
</dbReference>
<dbReference type="GO" id="GO:0071818">
    <property type="term" value="C:BAT3 complex"/>
    <property type="evidence" value="ECO:0000250"/>
    <property type="project" value="UniProtKB"/>
</dbReference>
<dbReference type="GO" id="GO:0005737">
    <property type="term" value="C:cytoplasm"/>
    <property type="evidence" value="ECO:0000250"/>
    <property type="project" value="MGI"/>
</dbReference>
<dbReference type="GO" id="GO:0005829">
    <property type="term" value="C:cytosol"/>
    <property type="evidence" value="ECO:0000314"/>
    <property type="project" value="UniProtKB"/>
</dbReference>
<dbReference type="GO" id="GO:0070062">
    <property type="term" value="C:extracellular exosome"/>
    <property type="evidence" value="ECO:0007669"/>
    <property type="project" value="Ensembl"/>
</dbReference>
<dbReference type="GO" id="GO:0016020">
    <property type="term" value="C:membrane"/>
    <property type="evidence" value="ECO:0007669"/>
    <property type="project" value="Ensembl"/>
</dbReference>
<dbReference type="GO" id="GO:0005654">
    <property type="term" value="C:nucleoplasm"/>
    <property type="evidence" value="ECO:0007669"/>
    <property type="project" value="Ensembl"/>
</dbReference>
<dbReference type="GO" id="GO:0005634">
    <property type="term" value="C:nucleus"/>
    <property type="evidence" value="ECO:0000314"/>
    <property type="project" value="MGI"/>
</dbReference>
<dbReference type="GO" id="GO:0030544">
    <property type="term" value="F:Hsp70 protein binding"/>
    <property type="evidence" value="ECO:0000353"/>
    <property type="project" value="UniProtKB"/>
</dbReference>
<dbReference type="GO" id="GO:0051787">
    <property type="term" value="F:misfolded protein binding"/>
    <property type="evidence" value="ECO:0007669"/>
    <property type="project" value="Ensembl"/>
</dbReference>
<dbReference type="GO" id="GO:0031593">
    <property type="term" value="F:polyubiquitin modification-dependent protein binding"/>
    <property type="evidence" value="ECO:0000314"/>
    <property type="project" value="UniProtKB"/>
</dbReference>
<dbReference type="GO" id="GO:0070628">
    <property type="term" value="F:proteasome binding"/>
    <property type="evidence" value="ECO:0000314"/>
    <property type="project" value="UniProtKB"/>
</dbReference>
<dbReference type="GO" id="GO:0140597">
    <property type="term" value="F:protein carrier chaperone"/>
    <property type="evidence" value="ECO:0007669"/>
    <property type="project" value="Ensembl"/>
</dbReference>
<dbReference type="GO" id="GO:0048018">
    <property type="term" value="F:receptor ligand activity"/>
    <property type="evidence" value="ECO:0007669"/>
    <property type="project" value="Ensembl"/>
</dbReference>
<dbReference type="GO" id="GO:0043022">
    <property type="term" value="F:ribosome binding"/>
    <property type="evidence" value="ECO:0000250"/>
    <property type="project" value="UniProtKB"/>
</dbReference>
<dbReference type="GO" id="GO:0031625">
    <property type="term" value="F:ubiquitin protein ligase binding"/>
    <property type="evidence" value="ECO:0007669"/>
    <property type="project" value="Ensembl"/>
</dbReference>
<dbReference type="GO" id="GO:1990381">
    <property type="term" value="F:ubiquitin-specific protease binding"/>
    <property type="evidence" value="ECO:0007669"/>
    <property type="project" value="Ensembl"/>
</dbReference>
<dbReference type="GO" id="GO:0002474">
    <property type="term" value="P:antigen processing and presentation of peptide antigen via MHC class I"/>
    <property type="evidence" value="ECO:0000304"/>
    <property type="project" value="UniProtKB"/>
</dbReference>
<dbReference type="GO" id="GO:0006915">
    <property type="term" value="P:apoptotic process"/>
    <property type="evidence" value="ECO:0000250"/>
    <property type="project" value="UniProtKB"/>
</dbReference>
<dbReference type="GO" id="GO:0007420">
    <property type="term" value="P:brain development"/>
    <property type="evidence" value="ECO:0000315"/>
    <property type="project" value="UniProtKB"/>
</dbReference>
<dbReference type="GO" id="GO:0030154">
    <property type="term" value="P:cell differentiation"/>
    <property type="evidence" value="ECO:0007669"/>
    <property type="project" value="UniProtKB-KW"/>
</dbReference>
<dbReference type="GO" id="GO:0006325">
    <property type="term" value="P:chromatin organization"/>
    <property type="evidence" value="ECO:0007669"/>
    <property type="project" value="UniProtKB-KW"/>
</dbReference>
<dbReference type="GO" id="GO:0061857">
    <property type="term" value="P:endoplasmic reticulum stress-induced pre-emptive quality control"/>
    <property type="evidence" value="ECO:0000250"/>
    <property type="project" value="UniProtKB"/>
</dbReference>
<dbReference type="GO" id="GO:0036503">
    <property type="term" value="P:ERAD pathway"/>
    <property type="evidence" value="ECO:0000250"/>
    <property type="project" value="UniProtKB"/>
</dbReference>
<dbReference type="GO" id="GO:0002429">
    <property type="term" value="P:immune response-activating cell surface receptor signaling pathway"/>
    <property type="evidence" value="ECO:0007669"/>
    <property type="project" value="Ensembl"/>
</dbReference>
<dbReference type="GO" id="GO:0018393">
    <property type="term" value="P:internal peptidyl-lysine acetylation"/>
    <property type="evidence" value="ECO:0000250"/>
    <property type="project" value="UniProtKB"/>
</dbReference>
<dbReference type="GO" id="GO:0042771">
    <property type="term" value="P:intrinsic apoptotic signaling pathway in response to DNA damage by p53 class mediator"/>
    <property type="evidence" value="ECO:0000250"/>
    <property type="project" value="UniProtKB"/>
</dbReference>
<dbReference type="GO" id="GO:0070059">
    <property type="term" value="P:intrinsic apoptotic signaling pathway in response to endoplasmic reticulum stress"/>
    <property type="evidence" value="ECO:0000315"/>
    <property type="project" value="UniProtKB"/>
</dbReference>
<dbReference type="GO" id="GO:0001822">
    <property type="term" value="P:kidney development"/>
    <property type="evidence" value="ECO:0000315"/>
    <property type="project" value="UniProtKB"/>
</dbReference>
<dbReference type="GO" id="GO:0030324">
    <property type="term" value="P:lung development"/>
    <property type="evidence" value="ECO:0000315"/>
    <property type="project" value="UniProtKB"/>
</dbReference>
<dbReference type="GO" id="GO:0036506">
    <property type="term" value="P:maintenance of unfolded protein"/>
    <property type="evidence" value="ECO:0007669"/>
    <property type="project" value="Ensembl"/>
</dbReference>
<dbReference type="GO" id="GO:0030101">
    <property type="term" value="P:natural killer cell activation"/>
    <property type="evidence" value="ECO:0007669"/>
    <property type="project" value="Ensembl"/>
</dbReference>
<dbReference type="GO" id="GO:0043066">
    <property type="term" value="P:negative regulation of apoptotic process"/>
    <property type="evidence" value="ECO:0000316"/>
    <property type="project" value="MGI"/>
</dbReference>
<dbReference type="GO" id="GO:0032435">
    <property type="term" value="P:negative regulation of proteasomal ubiquitin-dependent protein catabolic process"/>
    <property type="evidence" value="ECO:0000315"/>
    <property type="project" value="UniProtKB"/>
</dbReference>
<dbReference type="GO" id="GO:0045861">
    <property type="term" value="P:negative regulation of proteolysis"/>
    <property type="evidence" value="ECO:0000315"/>
    <property type="project" value="UniProtKB"/>
</dbReference>
<dbReference type="GO" id="GO:0051132">
    <property type="term" value="P:NK T cell activation"/>
    <property type="evidence" value="ECO:0007669"/>
    <property type="project" value="Ensembl"/>
</dbReference>
<dbReference type="GO" id="GO:1904294">
    <property type="term" value="P:positive regulation of ERAD pathway"/>
    <property type="evidence" value="ECO:0007669"/>
    <property type="project" value="Ensembl"/>
</dbReference>
<dbReference type="GO" id="GO:0006620">
    <property type="term" value="P:post-translational protein targeting to endoplasmic reticulum membrane"/>
    <property type="evidence" value="ECO:0000266"/>
    <property type="project" value="ComplexPortal"/>
</dbReference>
<dbReference type="GO" id="GO:0010498">
    <property type="term" value="P:proteasomal protein catabolic process"/>
    <property type="evidence" value="ECO:0000250"/>
    <property type="project" value="UniProtKB"/>
</dbReference>
<dbReference type="GO" id="GO:0043161">
    <property type="term" value="P:proteasome-mediated ubiquitin-dependent protein catabolic process"/>
    <property type="evidence" value="ECO:0000315"/>
    <property type="project" value="UniProtKB"/>
</dbReference>
<dbReference type="GO" id="GO:0050821">
    <property type="term" value="P:protein stabilization"/>
    <property type="evidence" value="ECO:0000315"/>
    <property type="project" value="UniProtKB"/>
</dbReference>
<dbReference type="GO" id="GO:0042981">
    <property type="term" value="P:regulation of apoptotic process"/>
    <property type="evidence" value="ECO:0000315"/>
    <property type="project" value="UniProtKB"/>
</dbReference>
<dbReference type="GO" id="GO:0045995">
    <property type="term" value="P:regulation of embryonic development"/>
    <property type="evidence" value="ECO:0000315"/>
    <property type="project" value="UniProtKB"/>
</dbReference>
<dbReference type="GO" id="GO:0031647">
    <property type="term" value="P:regulation of protein stability"/>
    <property type="evidence" value="ECO:0000266"/>
    <property type="project" value="ComplexPortal"/>
</dbReference>
<dbReference type="GO" id="GO:0007283">
    <property type="term" value="P:spermatogenesis"/>
    <property type="evidence" value="ECO:0000315"/>
    <property type="project" value="UniProtKB"/>
</dbReference>
<dbReference type="GO" id="GO:0007130">
    <property type="term" value="P:synaptonemal complex assembly"/>
    <property type="evidence" value="ECO:0000315"/>
    <property type="project" value="UniProtKB"/>
</dbReference>
<dbReference type="GO" id="GO:0071816">
    <property type="term" value="P:tail-anchored membrane protein insertion into ER membrane"/>
    <property type="evidence" value="ECO:0000250"/>
    <property type="project" value="UniProtKB"/>
</dbReference>
<dbReference type="GO" id="GO:0006511">
    <property type="term" value="P:ubiquitin-dependent protein catabolic process"/>
    <property type="evidence" value="ECO:0000315"/>
    <property type="project" value="UniProtKB"/>
</dbReference>
<dbReference type="CDD" id="cd01809">
    <property type="entry name" value="Ubl_BAG6"/>
    <property type="match status" value="1"/>
</dbReference>
<dbReference type="FunFam" id="3.10.20.90:FF:000041">
    <property type="entry name" value="large proline-rich protein BAG6 isoform X1"/>
    <property type="match status" value="1"/>
</dbReference>
<dbReference type="Gene3D" id="3.10.20.90">
    <property type="entry name" value="Phosphatidylinositol 3-kinase Catalytic Subunit, Chain A, domain 1"/>
    <property type="match status" value="1"/>
</dbReference>
<dbReference type="InterPro" id="IPR021925">
    <property type="entry name" value="BAG6"/>
</dbReference>
<dbReference type="InterPro" id="IPR048926">
    <property type="entry name" value="Bag6_BAGS"/>
</dbReference>
<dbReference type="InterPro" id="IPR000626">
    <property type="entry name" value="Ubiquitin-like_dom"/>
</dbReference>
<dbReference type="InterPro" id="IPR029071">
    <property type="entry name" value="Ubiquitin-like_domsf"/>
</dbReference>
<dbReference type="InterPro" id="IPR019954">
    <property type="entry name" value="Ubiquitin_CS"/>
</dbReference>
<dbReference type="PANTHER" id="PTHR15204">
    <property type="entry name" value="LARGE PROLINE-RICH PROTEIN BAG6"/>
    <property type="match status" value="1"/>
</dbReference>
<dbReference type="PANTHER" id="PTHR15204:SF0">
    <property type="entry name" value="LARGE PROLINE-RICH PROTEIN BAG6"/>
    <property type="match status" value="1"/>
</dbReference>
<dbReference type="Pfam" id="PF12057">
    <property type="entry name" value="BAG6"/>
    <property type="match status" value="1"/>
</dbReference>
<dbReference type="Pfam" id="PF20960">
    <property type="entry name" value="Bag6_BAGS"/>
    <property type="match status" value="1"/>
</dbReference>
<dbReference type="Pfam" id="PF00240">
    <property type="entry name" value="ubiquitin"/>
    <property type="match status" value="1"/>
</dbReference>
<dbReference type="SMART" id="SM00213">
    <property type="entry name" value="UBQ"/>
    <property type="match status" value="1"/>
</dbReference>
<dbReference type="SUPFAM" id="SSF101447">
    <property type="entry name" value="Formin homology 2 domain (FH2 domain)"/>
    <property type="match status" value="1"/>
</dbReference>
<dbReference type="SUPFAM" id="SSF54236">
    <property type="entry name" value="Ubiquitin-like"/>
    <property type="match status" value="1"/>
</dbReference>
<dbReference type="PROSITE" id="PS00299">
    <property type="entry name" value="UBIQUITIN_1"/>
    <property type="match status" value="1"/>
</dbReference>
<dbReference type="PROSITE" id="PS50053">
    <property type="entry name" value="UBIQUITIN_2"/>
    <property type="match status" value="1"/>
</dbReference>
<accession>Q9Z1R2</accession>
<accession>Q8SNA3</accession>